<sequence>MSKLPLLPTTVIGSYPRPKWLRESIRLHKAGKMSNEDLQEAFNDAVIAVFQDHYKAGVDVPTDGEVRRDEMVEFFAERIKGFKFYGPVRVWGTAYYRKPSVVSKIEYREPMLVDEFTFAKSVSYTDNLKITITGPYTIAEWSYNEYYRNKKDLVFDLAKAINQEIKNLVEAGAKIIQIDEPALHTRKEDVSWGVEAVNEAVKGVNAKLVMHICYGDYSFVAPYFNEIKVDQINFALKIYNYKPLELLKKYGFDKELGAGVVDVHNRKVETSEEVANDIRKILEYFPPEKVWINPDCGLKLLSRKIAYQKLVSMVEGTKVVREELKRKGYSVD</sequence>
<reference key="1">
    <citation type="journal article" date="2001" name="Proc. Natl. Acad. Sci. U.S.A.">
        <title>The complete genome of the crenarchaeon Sulfolobus solfataricus P2.</title>
        <authorList>
            <person name="She Q."/>
            <person name="Singh R.K."/>
            <person name="Confalonieri F."/>
            <person name="Zivanovic Y."/>
            <person name="Allard G."/>
            <person name="Awayez M.J."/>
            <person name="Chan-Weiher C.C.-Y."/>
            <person name="Clausen I.G."/>
            <person name="Curtis B.A."/>
            <person name="De Moors A."/>
            <person name="Erauso G."/>
            <person name="Fletcher C."/>
            <person name="Gordon P.M.K."/>
            <person name="Heikamp-de Jong I."/>
            <person name="Jeffries A.C."/>
            <person name="Kozera C.J."/>
            <person name="Medina N."/>
            <person name="Peng X."/>
            <person name="Thi-Ngoc H.P."/>
            <person name="Redder P."/>
            <person name="Schenk M.E."/>
            <person name="Theriault C."/>
            <person name="Tolstrup N."/>
            <person name="Charlebois R.L."/>
            <person name="Doolittle W.F."/>
            <person name="Duguet M."/>
            <person name="Gaasterland T."/>
            <person name="Garrett R.A."/>
            <person name="Ragan M.A."/>
            <person name="Sensen C.W."/>
            <person name="Van der Oost J."/>
        </authorList>
    </citation>
    <scope>NUCLEOTIDE SEQUENCE [LARGE SCALE GENOMIC DNA]</scope>
    <source>
        <strain>ATCC 35092 / DSM 1617 / JCM 11322 / P2</strain>
    </source>
</reference>
<comment type="function">
    <text evidence="1">Catalyzes the transfer of a methyl group to L-homocysteine resulting in methionine formation. The physiological methyl donor is unknown.</text>
</comment>
<comment type="cofactor">
    <cofactor evidence="1">
        <name>Zn(2+)</name>
        <dbReference type="ChEBI" id="CHEBI:29105"/>
    </cofactor>
    <text evidence="1">Binds 1 zinc ion per subunit.</text>
</comment>
<comment type="pathway">
    <text evidence="1">Amino-acid biosynthesis; L-methionine biosynthesis via de novo pathway.</text>
</comment>
<comment type="similarity">
    <text evidence="1 2">Belongs to the archaeal MetE family.</text>
</comment>
<protein>
    <recommendedName>
        <fullName evidence="1">Methionine synthase</fullName>
        <ecNumber evidence="1">2.1.1.-</ecNumber>
    </recommendedName>
    <alternativeName>
        <fullName evidence="1">Homocysteine methyltransferase</fullName>
    </alternativeName>
</protein>
<feature type="chain" id="PRO_0000098692" description="Methionine synthase">
    <location>
        <begin position="1"/>
        <end position="332"/>
    </location>
</feature>
<feature type="binding site" evidence="1">
    <location>
        <position position="211"/>
    </location>
    <ligand>
        <name>Zn(2+)</name>
        <dbReference type="ChEBI" id="CHEBI:29105"/>
        <note>catalytic</note>
    </ligand>
</feature>
<feature type="binding site" evidence="1">
    <location>
        <position position="213"/>
    </location>
    <ligand>
        <name>Zn(2+)</name>
        <dbReference type="ChEBI" id="CHEBI:29105"/>
        <note>catalytic</note>
    </ligand>
</feature>
<feature type="binding site" evidence="1">
    <location>
        <position position="296"/>
    </location>
    <ligand>
        <name>Zn(2+)</name>
        <dbReference type="ChEBI" id="CHEBI:29105"/>
        <note>catalytic</note>
    </ligand>
</feature>
<organism>
    <name type="scientific">Saccharolobus solfataricus (strain ATCC 35092 / DSM 1617 / JCM 11322 / P2)</name>
    <name type="common">Sulfolobus solfataricus</name>
    <dbReference type="NCBI Taxonomy" id="273057"/>
    <lineage>
        <taxon>Archaea</taxon>
        <taxon>Thermoproteota</taxon>
        <taxon>Thermoprotei</taxon>
        <taxon>Sulfolobales</taxon>
        <taxon>Sulfolobaceae</taxon>
        <taxon>Saccharolobus</taxon>
    </lineage>
</organism>
<accession>Q980A9</accession>
<name>METE_SACS2</name>
<evidence type="ECO:0000255" key="1">
    <source>
        <dbReference type="HAMAP-Rule" id="MF_00288"/>
    </source>
</evidence>
<evidence type="ECO:0000305" key="2"/>
<gene>
    <name evidence="1" type="primary">metE</name>
    <name type="ordered locus">SSO0407</name>
</gene>
<dbReference type="EC" id="2.1.1.-" evidence="1"/>
<dbReference type="EMBL" id="AE006641">
    <property type="protein sequence ID" value="AAK40736.1"/>
    <property type="molecule type" value="Genomic_DNA"/>
</dbReference>
<dbReference type="PIR" id="A99185">
    <property type="entry name" value="A99185"/>
</dbReference>
<dbReference type="RefSeq" id="WP_009988777.1">
    <property type="nucleotide sequence ID" value="NC_002754.1"/>
</dbReference>
<dbReference type="SMR" id="Q980A9"/>
<dbReference type="FunCoup" id="Q980A9">
    <property type="interactions" value="101"/>
</dbReference>
<dbReference type="STRING" id="273057.SSO0407"/>
<dbReference type="PaxDb" id="273057-SSO0407"/>
<dbReference type="EnsemblBacteria" id="AAK40736">
    <property type="protein sequence ID" value="AAK40736"/>
    <property type="gene ID" value="SSO0407"/>
</dbReference>
<dbReference type="KEGG" id="sso:SSO0407"/>
<dbReference type="PATRIC" id="fig|273057.12.peg.403"/>
<dbReference type="eggNOG" id="arCOG01876">
    <property type="taxonomic scope" value="Archaea"/>
</dbReference>
<dbReference type="HOGENOM" id="CLU_040013_3_2_2"/>
<dbReference type="InParanoid" id="Q980A9"/>
<dbReference type="PhylomeDB" id="Q980A9"/>
<dbReference type="UniPathway" id="UPA00051"/>
<dbReference type="Proteomes" id="UP000001974">
    <property type="component" value="Chromosome"/>
</dbReference>
<dbReference type="GO" id="GO:0003871">
    <property type="term" value="F:5-methyltetrahydropteroyltriglutamate-homocysteine S-methyltransferase activity"/>
    <property type="evidence" value="ECO:0007669"/>
    <property type="project" value="InterPro"/>
</dbReference>
<dbReference type="GO" id="GO:0008270">
    <property type="term" value="F:zinc ion binding"/>
    <property type="evidence" value="ECO:0007669"/>
    <property type="project" value="InterPro"/>
</dbReference>
<dbReference type="GO" id="GO:0009086">
    <property type="term" value="P:methionine biosynthetic process"/>
    <property type="evidence" value="ECO:0007669"/>
    <property type="project" value="UniProtKB-UniRule"/>
</dbReference>
<dbReference type="GO" id="GO:0032259">
    <property type="term" value="P:methylation"/>
    <property type="evidence" value="ECO:0007669"/>
    <property type="project" value="UniProtKB-KW"/>
</dbReference>
<dbReference type="CDD" id="cd03311">
    <property type="entry name" value="CIMS_C_terminal_like"/>
    <property type="match status" value="1"/>
</dbReference>
<dbReference type="Gene3D" id="3.20.20.210">
    <property type="match status" value="1"/>
</dbReference>
<dbReference type="HAMAP" id="MF_00288">
    <property type="entry name" value="MetE"/>
    <property type="match status" value="1"/>
</dbReference>
<dbReference type="InterPro" id="IPR002629">
    <property type="entry name" value="Met_Synth_C/arc"/>
</dbReference>
<dbReference type="InterPro" id="IPR022921">
    <property type="entry name" value="MetE_arc"/>
</dbReference>
<dbReference type="InterPro" id="IPR038071">
    <property type="entry name" value="UROD/MetE-like_sf"/>
</dbReference>
<dbReference type="NCBIfam" id="NF003317">
    <property type="entry name" value="PRK04326.1"/>
    <property type="match status" value="1"/>
</dbReference>
<dbReference type="PANTHER" id="PTHR30519">
    <property type="entry name" value="5-METHYLTETRAHYDROPTEROYLTRIGLUTAMATE--HOMOCYSTEINE METHYLTRANSFERASE"/>
    <property type="match status" value="1"/>
</dbReference>
<dbReference type="Pfam" id="PF01717">
    <property type="entry name" value="Meth_synt_2"/>
    <property type="match status" value="1"/>
</dbReference>
<dbReference type="SUPFAM" id="SSF51726">
    <property type="entry name" value="UROD/MetE-like"/>
    <property type="match status" value="1"/>
</dbReference>
<proteinExistence type="inferred from homology"/>
<keyword id="KW-0028">Amino-acid biosynthesis</keyword>
<keyword id="KW-0479">Metal-binding</keyword>
<keyword id="KW-0486">Methionine biosynthesis</keyword>
<keyword id="KW-0489">Methyltransferase</keyword>
<keyword id="KW-1185">Reference proteome</keyword>
<keyword id="KW-0808">Transferase</keyword>
<keyword id="KW-0862">Zinc</keyword>